<accession>Q21JK3</accession>
<feature type="chain" id="PRO_0000271954" description="Cytochrome c biogenesis ATP-binding export protein CcmA">
    <location>
        <begin position="1"/>
        <end position="223"/>
    </location>
</feature>
<feature type="domain" description="ABC transporter" evidence="1">
    <location>
        <begin position="1"/>
        <end position="223"/>
    </location>
</feature>
<feature type="binding site" evidence="1">
    <location>
        <begin position="31"/>
        <end position="38"/>
    </location>
    <ligand>
        <name>ATP</name>
        <dbReference type="ChEBI" id="CHEBI:30616"/>
    </ligand>
</feature>
<proteinExistence type="inferred from homology"/>
<gene>
    <name evidence="1" type="primary">ccmA</name>
    <name type="ordered locus">Sde_1866</name>
</gene>
<sequence length="223" mass="24342">MRSLACERDERLLFSDLSANFEAGDIVQILGSNGAGKTTLMRIVAGLSDSYTGEVLWNNAPHRGYDFFASVLYFGHATGVKQTLTALENLRWYFGLNGNKNTSAQAIDVSEAQLEAALHKVGLAGYEDVPCHQMSAGQKRRVALARLYCSKAPIWLLDEPFTAIDVGGVQQLESLIRAHAESGGIVLLTSHQPVSVPNLKTVDINQYRPLRGQKSDMAVGNDY</sequence>
<dbReference type="EC" id="7.6.2.5" evidence="1"/>
<dbReference type="EMBL" id="CP000282">
    <property type="protein sequence ID" value="ABD81126.1"/>
    <property type="molecule type" value="Genomic_DNA"/>
</dbReference>
<dbReference type="SMR" id="Q21JK3"/>
<dbReference type="STRING" id="203122.Sde_1866"/>
<dbReference type="KEGG" id="sde:Sde_1866"/>
<dbReference type="eggNOG" id="COG4133">
    <property type="taxonomic scope" value="Bacteria"/>
</dbReference>
<dbReference type="HOGENOM" id="CLU_000604_1_2_6"/>
<dbReference type="OrthoDB" id="9800654at2"/>
<dbReference type="Proteomes" id="UP000001947">
    <property type="component" value="Chromosome"/>
</dbReference>
<dbReference type="GO" id="GO:0005886">
    <property type="term" value="C:plasma membrane"/>
    <property type="evidence" value="ECO:0007669"/>
    <property type="project" value="UniProtKB-SubCell"/>
</dbReference>
<dbReference type="GO" id="GO:0015439">
    <property type="term" value="F:ABC-type heme transporter activity"/>
    <property type="evidence" value="ECO:0007669"/>
    <property type="project" value="UniProtKB-EC"/>
</dbReference>
<dbReference type="GO" id="GO:0005524">
    <property type="term" value="F:ATP binding"/>
    <property type="evidence" value="ECO:0007669"/>
    <property type="project" value="UniProtKB-KW"/>
</dbReference>
<dbReference type="GO" id="GO:0016887">
    <property type="term" value="F:ATP hydrolysis activity"/>
    <property type="evidence" value="ECO:0007669"/>
    <property type="project" value="InterPro"/>
</dbReference>
<dbReference type="GO" id="GO:0017004">
    <property type="term" value="P:cytochrome complex assembly"/>
    <property type="evidence" value="ECO:0007669"/>
    <property type="project" value="UniProtKB-KW"/>
</dbReference>
<dbReference type="Gene3D" id="3.40.50.300">
    <property type="entry name" value="P-loop containing nucleotide triphosphate hydrolases"/>
    <property type="match status" value="1"/>
</dbReference>
<dbReference type="InterPro" id="IPR003593">
    <property type="entry name" value="AAA+_ATPase"/>
</dbReference>
<dbReference type="InterPro" id="IPR003439">
    <property type="entry name" value="ABC_transporter-like_ATP-bd"/>
</dbReference>
<dbReference type="InterPro" id="IPR017871">
    <property type="entry name" value="ABC_transporter-like_CS"/>
</dbReference>
<dbReference type="InterPro" id="IPR005895">
    <property type="entry name" value="ABC_transptr_haem_export_CcmA"/>
</dbReference>
<dbReference type="InterPro" id="IPR027417">
    <property type="entry name" value="P-loop_NTPase"/>
</dbReference>
<dbReference type="NCBIfam" id="TIGR01189">
    <property type="entry name" value="ccmA"/>
    <property type="match status" value="1"/>
</dbReference>
<dbReference type="NCBIfam" id="NF010061">
    <property type="entry name" value="PRK13538.1"/>
    <property type="match status" value="1"/>
</dbReference>
<dbReference type="PANTHER" id="PTHR43499">
    <property type="entry name" value="ABC TRANSPORTER I FAMILY MEMBER 1"/>
    <property type="match status" value="1"/>
</dbReference>
<dbReference type="PANTHER" id="PTHR43499:SF1">
    <property type="entry name" value="ABC TRANSPORTER I FAMILY MEMBER 1"/>
    <property type="match status" value="1"/>
</dbReference>
<dbReference type="Pfam" id="PF00005">
    <property type="entry name" value="ABC_tran"/>
    <property type="match status" value="1"/>
</dbReference>
<dbReference type="SMART" id="SM00382">
    <property type="entry name" value="AAA"/>
    <property type="match status" value="1"/>
</dbReference>
<dbReference type="SUPFAM" id="SSF52540">
    <property type="entry name" value="P-loop containing nucleoside triphosphate hydrolases"/>
    <property type="match status" value="1"/>
</dbReference>
<dbReference type="PROSITE" id="PS00211">
    <property type="entry name" value="ABC_TRANSPORTER_1"/>
    <property type="match status" value="1"/>
</dbReference>
<dbReference type="PROSITE" id="PS50893">
    <property type="entry name" value="ABC_TRANSPORTER_2"/>
    <property type="match status" value="1"/>
</dbReference>
<dbReference type="PROSITE" id="PS51243">
    <property type="entry name" value="CCMA"/>
    <property type="match status" value="1"/>
</dbReference>
<organism>
    <name type="scientific">Saccharophagus degradans (strain 2-40 / ATCC 43961 / DSM 17024)</name>
    <dbReference type="NCBI Taxonomy" id="203122"/>
    <lineage>
        <taxon>Bacteria</taxon>
        <taxon>Pseudomonadati</taxon>
        <taxon>Pseudomonadota</taxon>
        <taxon>Gammaproteobacteria</taxon>
        <taxon>Cellvibrionales</taxon>
        <taxon>Cellvibrionaceae</taxon>
        <taxon>Saccharophagus</taxon>
    </lineage>
</organism>
<name>CCMA_SACD2</name>
<reference key="1">
    <citation type="journal article" date="2008" name="PLoS Genet.">
        <title>Complete genome sequence of the complex carbohydrate-degrading marine bacterium, Saccharophagus degradans strain 2-40 T.</title>
        <authorList>
            <person name="Weiner R.M."/>
            <person name="Taylor L.E. II"/>
            <person name="Henrissat B."/>
            <person name="Hauser L."/>
            <person name="Land M."/>
            <person name="Coutinho P.M."/>
            <person name="Rancurel C."/>
            <person name="Saunders E.H."/>
            <person name="Longmire A.G."/>
            <person name="Zhang H."/>
            <person name="Bayer E.A."/>
            <person name="Gilbert H.J."/>
            <person name="Larimer F."/>
            <person name="Zhulin I.B."/>
            <person name="Ekborg N.A."/>
            <person name="Lamed R."/>
            <person name="Richardson P.M."/>
            <person name="Borovok I."/>
            <person name="Hutcheson S."/>
        </authorList>
    </citation>
    <scope>NUCLEOTIDE SEQUENCE [LARGE SCALE GENOMIC DNA]</scope>
    <source>
        <strain>2-40 / ATCC 43961 / DSM 17024</strain>
    </source>
</reference>
<comment type="function">
    <text evidence="1">Part of the ABC transporter complex CcmAB involved in the biogenesis of c-type cytochromes; once thought to export heme, this seems not to be the case, but its exact role is uncertain. Responsible for energy coupling to the transport system.</text>
</comment>
<comment type="catalytic activity">
    <reaction evidence="1">
        <text>heme b(in) + ATP + H2O = heme b(out) + ADP + phosphate + H(+)</text>
        <dbReference type="Rhea" id="RHEA:19261"/>
        <dbReference type="ChEBI" id="CHEBI:15377"/>
        <dbReference type="ChEBI" id="CHEBI:15378"/>
        <dbReference type="ChEBI" id="CHEBI:30616"/>
        <dbReference type="ChEBI" id="CHEBI:43474"/>
        <dbReference type="ChEBI" id="CHEBI:60344"/>
        <dbReference type="ChEBI" id="CHEBI:456216"/>
        <dbReference type="EC" id="7.6.2.5"/>
    </reaction>
</comment>
<comment type="subunit">
    <text evidence="1">The complex is composed of two ATP-binding proteins (CcmA) and two transmembrane proteins (CcmB).</text>
</comment>
<comment type="subcellular location">
    <subcellularLocation>
        <location evidence="1">Cell inner membrane</location>
        <topology evidence="1">Peripheral membrane protein</topology>
    </subcellularLocation>
</comment>
<comment type="similarity">
    <text evidence="1">Belongs to the ABC transporter superfamily. CcmA exporter (TC 3.A.1.107) family.</text>
</comment>
<evidence type="ECO:0000255" key="1">
    <source>
        <dbReference type="HAMAP-Rule" id="MF_01707"/>
    </source>
</evidence>
<protein>
    <recommendedName>
        <fullName evidence="1">Cytochrome c biogenesis ATP-binding export protein CcmA</fullName>
        <ecNumber evidence="1">7.6.2.5</ecNumber>
    </recommendedName>
    <alternativeName>
        <fullName evidence="1">Heme exporter protein A</fullName>
    </alternativeName>
</protein>
<keyword id="KW-0067">ATP-binding</keyword>
<keyword id="KW-0997">Cell inner membrane</keyword>
<keyword id="KW-1003">Cell membrane</keyword>
<keyword id="KW-0201">Cytochrome c-type biogenesis</keyword>
<keyword id="KW-0472">Membrane</keyword>
<keyword id="KW-0547">Nucleotide-binding</keyword>
<keyword id="KW-1185">Reference proteome</keyword>
<keyword id="KW-1278">Translocase</keyword>
<keyword id="KW-0813">Transport</keyword>